<feature type="chain" id="PRO_0000155720" description="Homoserine O-acetyltransferase">
    <location>
        <begin position="1"/>
        <end position="402"/>
    </location>
</feature>
<feature type="domain" description="AB hydrolase-1" evidence="1">
    <location>
        <begin position="78"/>
        <end position="388"/>
    </location>
</feature>
<feature type="region of interest" description="Disordered" evidence="2">
    <location>
        <begin position="1"/>
        <end position="39"/>
    </location>
</feature>
<feature type="compositionally biased region" description="Polar residues" evidence="2">
    <location>
        <begin position="1"/>
        <end position="17"/>
    </location>
</feature>
<feature type="active site" description="Nucleophile" evidence="1">
    <location>
        <position position="183"/>
    </location>
</feature>
<feature type="active site" evidence="1">
    <location>
        <position position="349"/>
    </location>
</feature>
<feature type="active site" evidence="1">
    <location>
        <position position="382"/>
    </location>
</feature>
<feature type="binding site" evidence="1">
    <location>
        <position position="255"/>
    </location>
    <ligand>
        <name>substrate</name>
    </ligand>
</feature>
<feature type="binding site" evidence="1">
    <location>
        <position position="383"/>
    </location>
    <ligand>
        <name>substrate</name>
    </ligand>
</feature>
<dbReference type="EC" id="2.3.1.31" evidence="1"/>
<dbReference type="EMBL" id="AE016822">
    <property type="protein sequence ID" value="AAT89625.1"/>
    <property type="molecule type" value="Genomic_DNA"/>
</dbReference>
<dbReference type="RefSeq" id="WP_011186612.1">
    <property type="nucleotide sequence ID" value="NC_006087.1"/>
</dbReference>
<dbReference type="SMR" id="Q6ADB9"/>
<dbReference type="STRING" id="281090.Lxx18950"/>
<dbReference type="ESTHER" id="leixx-q6adb9">
    <property type="family name" value="Homoserine_transacetylase"/>
</dbReference>
<dbReference type="KEGG" id="lxx:Lxx18950"/>
<dbReference type="eggNOG" id="COG2021">
    <property type="taxonomic scope" value="Bacteria"/>
</dbReference>
<dbReference type="HOGENOM" id="CLU_028760_1_0_11"/>
<dbReference type="UniPathway" id="UPA00051">
    <property type="reaction ID" value="UER00074"/>
</dbReference>
<dbReference type="Proteomes" id="UP000001306">
    <property type="component" value="Chromosome"/>
</dbReference>
<dbReference type="GO" id="GO:0005737">
    <property type="term" value="C:cytoplasm"/>
    <property type="evidence" value="ECO:0007669"/>
    <property type="project" value="UniProtKB-SubCell"/>
</dbReference>
<dbReference type="GO" id="GO:0004414">
    <property type="term" value="F:homoserine O-acetyltransferase activity"/>
    <property type="evidence" value="ECO:0007669"/>
    <property type="project" value="UniProtKB-UniRule"/>
</dbReference>
<dbReference type="GO" id="GO:0009092">
    <property type="term" value="P:homoserine metabolic process"/>
    <property type="evidence" value="ECO:0007669"/>
    <property type="project" value="TreeGrafter"/>
</dbReference>
<dbReference type="GO" id="GO:0009086">
    <property type="term" value="P:methionine biosynthetic process"/>
    <property type="evidence" value="ECO:0007669"/>
    <property type="project" value="UniProtKB-UniRule"/>
</dbReference>
<dbReference type="Gene3D" id="1.10.1740.110">
    <property type="match status" value="1"/>
</dbReference>
<dbReference type="Gene3D" id="3.40.50.1820">
    <property type="entry name" value="alpha/beta hydrolase"/>
    <property type="match status" value="1"/>
</dbReference>
<dbReference type="HAMAP" id="MF_00296">
    <property type="entry name" value="MetX_acyltransf"/>
    <property type="match status" value="1"/>
</dbReference>
<dbReference type="InterPro" id="IPR000073">
    <property type="entry name" value="AB_hydrolase_1"/>
</dbReference>
<dbReference type="InterPro" id="IPR029058">
    <property type="entry name" value="AB_hydrolase_fold"/>
</dbReference>
<dbReference type="InterPro" id="IPR008220">
    <property type="entry name" value="HAT_MetX-like"/>
</dbReference>
<dbReference type="NCBIfam" id="TIGR01392">
    <property type="entry name" value="homoserO_Ac_trn"/>
    <property type="match status" value="1"/>
</dbReference>
<dbReference type="NCBIfam" id="NF001209">
    <property type="entry name" value="PRK00175.1"/>
    <property type="match status" value="1"/>
</dbReference>
<dbReference type="PANTHER" id="PTHR32268">
    <property type="entry name" value="HOMOSERINE O-ACETYLTRANSFERASE"/>
    <property type="match status" value="1"/>
</dbReference>
<dbReference type="PANTHER" id="PTHR32268:SF11">
    <property type="entry name" value="HOMOSERINE O-ACETYLTRANSFERASE"/>
    <property type="match status" value="1"/>
</dbReference>
<dbReference type="Pfam" id="PF00561">
    <property type="entry name" value="Abhydrolase_1"/>
    <property type="match status" value="1"/>
</dbReference>
<dbReference type="PIRSF" id="PIRSF000443">
    <property type="entry name" value="Homoser_Ac_trans"/>
    <property type="match status" value="1"/>
</dbReference>
<dbReference type="SUPFAM" id="SSF53474">
    <property type="entry name" value="alpha/beta-Hydrolases"/>
    <property type="match status" value="1"/>
</dbReference>
<sequence length="402" mass="42932">MDWQTTSADTAPSSFITEEQDRSLFGKPPASGAWKESDPVGGRRFAGIGAFGFESGESLPFVRIAYETWGELSPARDNAVLVLHALTGDSHAVGAAGPGHRTSGWWQGIIGPGKAIDTDRWFVAVPNMLGGCQGTTGPTSIAPDGAEWGARFPFTTIRDQVKAQAAFADALGIGRWAAVVGGSMGGMQALEWAVGFPERVERLAVIAAPPHSTADQIAFNSVQLGAIRTDPLFHGGSYYDEKDGEGPHQGLALARRMALITYRSLSELNDRFERTWQSGISPLGDGGRFAVESYLDFHGNKFTRRFDANSYLTLVQAMNSHDVGHDGSGLAAALSRVTATTLVVGIDSDRLFPVDGQELIASHLPAALDGRVPLVVRSHFGHDGFLIEDDLIGGQLRRLFAA</sequence>
<gene>
    <name evidence="1" type="primary">metXA</name>
    <name type="ordered locus">Lxx18950</name>
</gene>
<protein>
    <recommendedName>
        <fullName evidence="1">Homoserine O-acetyltransferase</fullName>
        <shortName evidence="1">HAT</shortName>
        <ecNumber evidence="1">2.3.1.31</ecNumber>
    </recommendedName>
    <alternativeName>
        <fullName evidence="1">Homoserine transacetylase</fullName>
        <shortName evidence="1">HTA</shortName>
    </alternativeName>
</protein>
<proteinExistence type="inferred from homology"/>
<reference key="1">
    <citation type="journal article" date="2004" name="Mol. Plant Microbe Interact.">
        <title>The genome sequence of the Gram-positive sugarcane pathogen Leifsonia xyli subsp. xyli.</title>
        <authorList>
            <person name="Monteiro-Vitorello C.B."/>
            <person name="Camargo L.E.A."/>
            <person name="Van Sluys M.A."/>
            <person name="Kitajima J.P."/>
            <person name="Truffi D."/>
            <person name="do Amaral A.M."/>
            <person name="Harakava R."/>
            <person name="de Oliveira J.C.F."/>
            <person name="Wood D."/>
            <person name="de Oliveira M.C."/>
            <person name="Miyaki C.Y."/>
            <person name="Takita M.A."/>
            <person name="da Silva A.C.R."/>
            <person name="Furlan L.R."/>
            <person name="Carraro D.M."/>
            <person name="Camarotte G."/>
            <person name="Almeida N.F. Jr."/>
            <person name="Carrer H."/>
            <person name="Coutinho L.L."/>
            <person name="El-Dorry H.A."/>
            <person name="Ferro M.I.T."/>
            <person name="Gagliardi P.R."/>
            <person name="Giglioti E."/>
            <person name="Goldman M.H.S."/>
            <person name="Goldman G.H."/>
            <person name="Kimura E.T."/>
            <person name="Ferro E.S."/>
            <person name="Kuramae E.E."/>
            <person name="Lemos E.G.M."/>
            <person name="Lemos M.V.F."/>
            <person name="Mauro S.M.Z."/>
            <person name="Machado M.A."/>
            <person name="Marino C.L."/>
            <person name="Menck C.F."/>
            <person name="Nunes L.R."/>
            <person name="Oliveira R.C."/>
            <person name="Pereira G.G."/>
            <person name="Siqueira W."/>
            <person name="de Souza A.A."/>
            <person name="Tsai S.M."/>
            <person name="Zanca A.S."/>
            <person name="Simpson A.J.G."/>
            <person name="Brumbley S.M."/>
            <person name="Setubal J.C."/>
        </authorList>
    </citation>
    <scope>NUCLEOTIDE SEQUENCE [LARGE SCALE GENOMIC DNA]</scope>
    <source>
        <strain>CTCB07</strain>
    </source>
</reference>
<evidence type="ECO:0000255" key="1">
    <source>
        <dbReference type="HAMAP-Rule" id="MF_00296"/>
    </source>
</evidence>
<evidence type="ECO:0000256" key="2">
    <source>
        <dbReference type="SAM" id="MobiDB-lite"/>
    </source>
</evidence>
<accession>Q6ADB9</accession>
<comment type="function">
    <text evidence="1">Transfers an acetyl group from acetyl-CoA to L-homoserine, forming acetyl-L-homoserine.</text>
</comment>
<comment type="catalytic activity">
    <reaction evidence="1">
        <text>L-homoserine + acetyl-CoA = O-acetyl-L-homoserine + CoA</text>
        <dbReference type="Rhea" id="RHEA:13701"/>
        <dbReference type="ChEBI" id="CHEBI:57287"/>
        <dbReference type="ChEBI" id="CHEBI:57288"/>
        <dbReference type="ChEBI" id="CHEBI:57476"/>
        <dbReference type="ChEBI" id="CHEBI:57716"/>
        <dbReference type="EC" id="2.3.1.31"/>
    </reaction>
</comment>
<comment type="pathway">
    <text evidence="1">Amino-acid biosynthesis; L-methionine biosynthesis via de novo pathway; O-acetyl-L-homoserine from L-homoserine: step 1/1.</text>
</comment>
<comment type="subunit">
    <text evidence="1">Homodimer.</text>
</comment>
<comment type="subcellular location">
    <subcellularLocation>
        <location evidence="1">Cytoplasm</location>
    </subcellularLocation>
</comment>
<comment type="similarity">
    <text evidence="1">Belongs to the AB hydrolase superfamily. MetX family.</text>
</comment>
<name>METXA_LEIXX</name>
<organism>
    <name type="scientific">Leifsonia xyli subsp. xyli (strain CTCB07)</name>
    <dbReference type="NCBI Taxonomy" id="281090"/>
    <lineage>
        <taxon>Bacteria</taxon>
        <taxon>Bacillati</taxon>
        <taxon>Actinomycetota</taxon>
        <taxon>Actinomycetes</taxon>
        <taxon>Micrococcales</taxon>
        <taxon>Microbacteriaceae</taxon>
        <taxon>Leifsonia</taxon>
    </lineage>
</organism>
<keyword id="KW-0012">Acyltransferase</keyword>
<keyword id="KW-0028">Amino-acid biosynthesis</keyword>
<keyword id="KW-0963">Cytoplasm</keyword>
<keyword id="KW-0486">Methionine biosynthesis</keyword>
<keyword id="KW-1185">Reference proteome</keyword>
<keyword id="KW-0808">Transferase</keyword>